<gene>
    <name evidence="1" type="primary">alaS</name>
    <name type="ordered locus">M1425_1765</name>
</gene>
<keyword id="KW-0030">Aminoacyl-tRNA synthetase</keyword>
<keyword id="KW-0067">ATP-binding</keyword>
<keyword id="KW-0963">Cytoplasm</keyword>
<keyword id="KW-0436">Ligase</keyword>
<keyword id="KW-0479">Metal-binding</keyword>
<keyword id="KW-0547">Nucleotide-binding</keyword>
<keyword id="KW-0648">Protein biosynthesis</keyword>
<keyword id="KW-0694">RNA-binding</keyword>
<keyword id="KW-0820">tRNA-binding</keyword>
<keyword id="KW-0862">Zinc</keyword>
<proteinExistence type="inferred from homology"/>
<dbReference type="EC" id="6.1.1.7" evidence="1"/>
<dbReference type="EMBL" id="CP001400">
    <property type="protein sequence ID" value="ACP38510.1"/>
    <property type="molecule type" value="Genomic_DNA"/>
</dbReference>
<dbReference type="RefSeq" id="WP_012711740.1">
    <property type="nucleotide sequence ID" value="NC_012588.1"/>
</dbReference>
<dbReference type="SMR" id="C3MXH6"/>
<dbReference type="GeneID" id="84062116"/>
<dbReference type="KEGG" id="sia:M1425_1765"/>
<dbReference type="HOGENOM" id="CLU_004485_4_0_2"/>
<dbReference type="Proteomes" id="UP000001350">
    <property type="component" value="Chromosome"/>
</dbReference>
<dbReference type="GO" id="GO:0005737">
    <property type="term" value="C:cytoplasm"/>
    <property type="evidence" value="ECO:0007669"/>
    <property type="project" value="UniProtKB-SubCell"/>
</dbReference>
<dbReference type="GO" id="GO:0004813">
    <property type="term" value="F:alanine-tRNA ligase activity"/>
    <property type="evidence" value="ECO:0007669"/>
    <property type="project" value="UniProtKB-UniRule"/>
</dbReference>
<dbReference type="GO" id="GO:0002161">
    <property type="term" value="F:aminoacyl-tRNA deacylase activity"/>
    <property type="evidence" value="ECO:0007669"/>
    <property type="project" value="TreeGrafter"/>
</dbReference>
<dbReference type="GO" id="GO:0005524">
    <property type="term" value="F:ATP binding"/>
    <property type="evidence" value="ECO:0007669"/>
    <property type="project" value="UniProtKB-UniRule"/>
</dbReference>
<dbReference type="GO" id="GO:0000049">
    <property type="term" value="F:tRNA binding"/>
    <property type="evidence" value="ECO:0007669"/>
    <property type="project" value="UniProtKB-KW"/>
</dbReference>
<dbReference type="GO" id="GO:0008270">
    <property type="term" value="F:zinc ion binding"/>
    <property type="evidence" value="ECO:0007669"/>
    <property type="project" value="UniProtKB-UniRule"/>
</dbReference>
<dbReference type="GO" id="GO:0006419">
    <property type="term" value="P:alanyl-tRNA aminoacylation"/>
    <property type="evidence" value="ECO:0007669"/>
    <property type="project" value="UniProtKB-UniRule"/>
</dbReference>
<dbReference type="CDD" id="cd00673">
    <property type="entry name" value="AlaRS_core"/>
    <property type="match status" value="1"/>
</dbReference>
<dbReference type="FunFam" id="3.30.54.20:FF:000004">
    <property type="entry name" value="Alanine--tRNA ligase"/>
    <property type="match status" value="1"/>
</dbReference>
<dbReference type="FunFam" id="3.30.930.10:FF:000056">
    <property type="entry name" value="Alanine--tRNA ligase"/>
    <property type="match status" value="1"/>
</dbReference>
<dbReference type="FunFam" id="3.30.980.10:FF:000004">
    <property type="entry name" value="Alanine--tRNA ligase, cytoplasmic"/>
    <property type="match status" value="1"/>
</dbReference>
<dbReference type="Gene3D" id="2.40.30.130">
    <property type="match status" value="1"/>
</dbReference>
<dbReference type="Gene3D" id="3.30.54.20">
    <property type="match status" value="1"/>
</dbReference>
<dbReference type="Gene3D" id="3.30.930.10">
    <property type="entry name" value="Bira Bifunctional Protein, Domain 2"/>
    <property type="match status" value="1"/>
</dbReference>
<dbReference type="Gene3D" id="3.30.980.10">
    <property type="entry name" value="Threonyl-trna Synthetase, Chain A, domain 2"/>
    <property type="match status" value="1"/>
</dbReference>
<dbReference type="HAMAP" id="MF_00036_A">
    <property type="entry name" value="Ala_tRNA_synth_A"/>
    <property type="match status" value="1"/>
</dbReference>
<dbReference type="InterPro" id="IPR045864">
    <property type="entry name" value="aa-tRNA-synth_II/BPL/LPL"/>
</dbReference>
<dbReference type="InterPro" id="IPR002318">
    <property type="entry name" value="Ala-tRNA-lgiase_IIc"/>
</dbReference>
<dbReference type="InterPro" id="IPR018162">
    <property type="entry name" value="Ala-tRNA-ligase_IIc_anticod-bd"/>
</dbReference>
<dbReference type="InterPro" id="IPR018165">
    <property type="entry name" value="Ala-tRNA-synth_IIc_core"/>
</dbReference>
<dbReference type="InterPro" id="IPR018164">
    <property type="entry name" value="Ala-tRNA-synth_IIc_N"/>
</dbReference>
<dbReference type="InterPro" id="IPR022429">
    <property type="entry name" value="Ala-tRNA_lgiase_arc"/>
</dbReference>
<dbReference type="InterPro" id="IPR050058">
    <property type="entry name" value="Ala-tRNA_ligase"/>
</dbReference>
<dbReference type="InterPro" id="IPR018163">
    <property type="entry name" value="Thr/Ala-tRNA-synth_IIc_edit"/>
</dbReference>
<dbReference type="InterPro" id="IPR009000">
    <property type="entry name" value="Transl_B-barrel_sf"/>
</dbReference>
<dbReference type="InterPro" id="IPR012947">
    <property type="entry name" value="tRNA_SAD"/>
</dbReference>
<dbReference type="NCBIfam" id="TIGR03683">
    <property type="entry name" value="A-tRNA_syn_arch"/>
    <property type="match status" value="1"/>
</dbReference>
<dbReference type="NCBIfam" id="TIGR00344">
    <property type="entry name" value="alaS"/>
    <property type="match status" value="1"/>
</dbReference>
<dbReference type="PANTHER" id="PTHR11777:SF9">
    <property type="entry name" value="ALANINE--TRNA LIGASE, CYTOPLASMIC"/>
    <property type="match status" value="1"/>
</dbReference>
<dbReference type="PANTHER" id="PTHR11777">
    <property type="entry name" value="ALANYL-TRNA SYNTHETASE"/>
    <property type="match status" value="1"/>
</dbReference>
<dbReference type="Pfam" id="PF01411">
    <property type="entry name" value="tRNA-synt_2c"/>
    <property type="match status" value="1"/>
</dbReference>
<dbReference type="Pfam" id="PF07973">
    <property type="entry name" value="tRNA_SAD"/>
    <property type="match status" value="1"/>
</dbReference>
<dbReference type="PRINTS" id="PR00980">
    <property type="entry name" value="TRNASYNTHALA"/>
</dbReference>
<dbReference type="SMART" id="SM00863">
    <property type="entry name" value="tRNA_SAD"/>
    <property type="match status" value="1"/>
</dbReference>
<dbReference type="SUPFAM" id="SSF55681">
    <property type="entry name" value="Class II aaRS and biotin synthetases"/>
    <property type="match status" value="1"/>
</dbReference>
<dbReference type="SUPFAM" id="SSF101353">
    <property type="entry name" value="Putative anticodon-binding domain of alanyl-tRNA synthetase (AlaRS)"/>
    <property type="match status" value="1"/>
</dbReference>
<dbReference type="SUPFAM" id="SSF55186">
    <property type="entry name" value="ThrRS/AlaRS common domain"/>
    <property type="match status" value="1"/>
</dbReference>
<dbReference type="SUPFAM" id="SSF50447">
    <property type="entry name" value="Translation proteins"/>
    <property type="match status" value="1"/>
</dbReference>
<dbReference type="PROSITE" id="PS50860">
    <property type="entry name" value="AA_TRNA_LIGASE_II_ALA"/>
    <property type="match status" value="1"/>
</dbReference>
<evidence type="ECO:0000255" key="1">
    <source>
        <dbReference type="HAMAP-Rule" id="MF_00036"/>
    </source>
</evidence>
<reference key="1">
    <citation type="journal article" date="2009" name="Proc. Natl. Acad. Sci. U.S.A.">
        <title>Biogeography of the Sulfolobus islandicus pan-genome.</title>
        <authorList>
            <person name="Reno M.L."/>
            <person name="Held N.L."/>
            <person name="Fields C.J."/>
            <person name="Burke P.V."/>
            <person name="Whitaker R.J."/>
        </authorList>
    </citation>
    <scope>NUCLEOTIDE SEQUENCE [LARGE SCALE GENOMIC DNA]</scope>
    <source>
        <strain>M.14.25 / Kamchatka #1</strain>
    </source>
</reference>
<accession>C3MXH6</accession>
<feature type="chain" id="PRO_1000202049" description="Alanine--tRNA ligase">
    <location>
        <begin position="1"/>
        <end position="900"/>
    </location>
</feature>
<feature type="binding site" evidence="1">
    <location>
        <position position="604"/>
    </location>
    <ligand>
        <name>Zn(2+)</name>
        <dbReference type="ChEBI" id="CHEBI:29105"/>
    </ligand>
</feature>
<feature type="binding site" evidence="1">
    <location>
        <position position="608"/>
    </location>
    <ligand>
        <name>Zn(2+)</name>
        <dbReference type="ChEBI" id="CHEBI:29105"/>
    </ligand>
</feature>
<feature type="binding site" evidence="1">
    <location>
        <position position="708"/>
    </location>
    <ligand>
        <name>Zn(2+)</name>
        <dbReference type="ChEBI" id="CHEBI:29105"/>
    </ligand>
</feature>
<feature type="binding site" evidence="1">
    <location>
        <position position="712"/>
    </location>
    <ligand>
        <name>Zn(2+)</name>
        <dbReference type="ChEBI" id="CHEBI:29105"/>
    </ligand>
</feature>
<organism>
    <name type="scientific">Saccharolobus islandicus (strain M.14.25 / Kamchatka #1)</name>
    <name type="common">Sulfolobus islandicus</name>
    <dbReference type="NCBI Taxonomy" id="427317"/>
    <lineage>
        <taxon>Archaea</taxon>
        <taxon>Thermoproteota</taxon>
        <taxon>Thermoprotei</taxon>
        <taxon>Sulfolobales</taxon>
        <taxon>Sulfolobaceae</taxon>
        <taxon>Saccharolobus</taxon>
    </lineage>
</organism>
<protein>
    <recommendedName>
        <fullName evidence="1">Alanine--tRNA ligase</fullName>
        <ecNumber evidence="1">6.1.1.7</ecNumber>
    </recommendedName>
    <alternativeName>
        <fullName evidence="1">Alanyl-tRNA synthetase</fullName>
        <shortName evidence="1">AlaRS</shortName>
    </alternativeName>
</protein>
<sequence length="900" mass="103016">MKASEEEYRLNFFIKNDFKRKICKSCKTPFWTRDEKKEYCSDIPCTDYYFFDINIKSQPLTVKEAREKFLSFFEKRGHTRISPKPVLARWRDDLYLTIASIVDFQPHVTSGLVPPPANPLVVSQPSIRLEDIDNVGITFGRHLTTFEMAAHHAFNYPDHYVYWKDETTAYATEFFTKELGIPEEELNFKESWWEGGGNAGPCLEVTVGGLELATLVFMQYKITDNGNYTPLKLKIVDTGYGVERIAWITQKTPSAFHAIYGNLVYKFFNKIGVAYIDETLLKVASRFAGKIDPDNPDTIKIHRQMVSKELGIDIKAVEEELDRAAKVFQILDHTKTIMLMLADGLVPSNSGEGYLGRLVIRRALKVLRLLKSDVRLYELVKEQIDFWKEDFPQVLKNKDYILDAVELEQQRFEKILEKVPSIASTLARKSEITTEDLIQVYDSNGIPPDLLEEELKKKSVKFELPRNFYALVAKRHQTSTIKSVYDKVKLPKDMLEYITALQPTEKLYYKDQYMRSFEGKVLGVYKNYLILDKTTFYPEGGGQLGDTGLIIDEKSSKRYEVIDTQKVNDVIVHILKEEPSTIKVGDNVRGEINWERRYRLMRHHTVTHVILAAAKKVLGEHVWQAGAEKTPEKGRLDITHHKTLTEEEVKLIENYANSVISDRRPVKPLEMNRMEAEMKYGVSIYEGGVPNSATIRLLEIKDWDIESCGGTHVSNTSEIGAVKIINVERIQDGVIRLEYVAGPALVDYIRETEAKIVEASKIIGSSPDQLTSRLRRLLNEIEEKNNLIIQYRRIIETELLNNLKPYEINGNKIYIIEGLGDEEENKEILRKLTSTDNTIAISISDNRLQIATSKNMRVDKIVEELLKGGGKGGGKGTFANVILNSKKSKEEIIEIVRKSL</sequence>
<name>SYA_SACI4</name>
<comment type="function">
    <text evidence="1">Catalyzes the attachment of alanine to tRNA(Ala) in a two-step reaction: alanine is first activated by ATP to form Ala-AMP and then transferred to the acceptor end of tRNA(Ala). Also edits incorrectly charged Ser-tRNA(Ala) and Gly-tRNA(Ala) via its editing domain.</text>
</comment>
<comment type="catalytic activity">
    <reaction evidence="1">
        <text>tRNA(Ala) + L-alanine + ATP = L-alanyl-tRNA(Ala) + AMP + diphosphate</text>
        <dbReference type="Rhea" id="RHEA:12540"/>
        <dbReference type="Rhea" id="RHEA-COMP:9657"/>
        <dbReference type="Rhea" id="RHEA-COMP:9923"/>
        <dbReference type="ChEBI" id="CHEBI:30616"/>
        <dbReference type="ChEBI" id="CHEBI:33019"/>
        <dbReference type="ChEBI" id="CHEBI:57972"/>
        <dbReference type="ChEBI" id="CHEBI:78442"/>
        <dbReference type="ChEBI" id="CHEBI:78497"/>
        <dbReference type="ChEBI" id="CHEBI:456215"/>
        <dbReference type="EC" id="6.1.1.7"/>
    </reaction>
</comment>
<comment type="cofactor">
    <cofactor evidence="1">
        <name>Zn(2+)</name>
        <dbReference type="ChEBI" id="CHEBI:29105"/>
    </cofactor>
    <text evidence="1">Binds 1 zinc ion per subunit.</text>
</comment>
<comment type="subcellular location">
    <subcellularLocation>
        <location evidence="1">Cytoplasm</location>
    </subcellularLocation>
</comment>
<comment type="domain">
    <text evidence="1">Consists of three domains; the N-terminal catalytic domain, the editing domain and the C-terminal C-Ala domain. The editing domain removes incorrectly charged amino acids, while the C-Ala domain, along with tRNA(Ala), serves as a bridge to cooperatively bring together the editing and aminoacylation centers thus stimulating deacylation of misacylated tRNAs.</text>
</comment>
<comment type="similarity">
    <text evidence="1">Belongs to the class-II aminoacyl-tRNA synthetase family.</text>
</comment>